<sequence length="909" mass="99334">MANEQKTAAKDVFQARKTFTTNGKTYHYYSLKALEDSGIGKVSKLPYSIKVLLESVLRQVDGFVIKKEHVENLAKWGTAELKDIDVPFKPSRVILQDFTGVPAVVDLASLRKAMAAVGGDPDKINPEIPVDLVIDHSVQVDKAGTEDALAVNMDLEFERNAERYKFLSWAKKAFNNYQAVPPATGIVHQVNLEFLASVVHAIEEDGELVTYPDTLVGTDSHTTMINGIGVLGWGVGGIEAEAGMLGQPSYFPVPEVIGAKLVGKLPNGTTATDLALKVTQVLREKGVVGKFVEFFGPGIAELPLADRATIANMAPEYGATCGFFPVDEEALNYLRLTGRDPEHIDVVEAYCRSNGLFYTPDAEDPQFTDVVEIDLSQIEANLSGPKRPQDLIPLSAMQETFKKQLVSPAGNQGFGLNAEEENKEIKFKLLNGEETVMKTGAIAIAAITSCTNTSNPYVLIGAGLVAKKAVELGLKVPNYVKTSLAPGSKVVTGYLVNSGLLPYMKELGFNLVGYGCTTCIGNSGPLSPEIEEAVAKNDLLITSVLSGNRNFEGRIHPLVKGNYLASPPLVVAYALAGTVNINLKTDPIGVGKDGQNVYFNDIWPSMDEINALVKQTVTPELFRKEYETVFDDNKRWNEIETTDEALYKWDNDSTYIQNPPFFEEMSVEPGKVEPLKGLRVVGKFGDSVTTDHISPAGAIGKDTPAGKYLQEKGVSPRDFNSYGSRRGNHEVMMRGTFANIRIKNQIAPGTEGGFTTYWPTGEVTSIYDACMKYKEDKTGLVVLAGKDYGMGSSRDWAAKGTNLLGIRTVIAESFERIHRSNLVFMGVLPLQFKQGENADTLGLTGKEVIEVDVDETVRPRDLVTVRAINEDGNVTTFEAVVRFDSEVEIDYYRHGGILQMVLREKMKQS</sequence>
<gene>
    <name type="primary">citB</name>
    <name type="ordered locus">BSU18000</name>
</gene>
<organism>
    <name type="scientific">Bacillus subtilis (strain 168)</name>
    <dbReference type="NCBI Taxonomy" id="224308"/>
    <lineage>
        <taxon>Bacteria</taxon>
        <taxon>Bacillati</taxon>
        <taxon>Bacillota</taxon>
        <taxon>Bacilli</taxon>
        <taxon>Bacillales</taxon>
        <taxon>Bacillaceae</taxon>
        <taxon>Bacillus</taxon>
    </lineage>
</organism>
<name>ACNA_BACSU</name>
<keyword id="KW-0903">Direct protein sequencing</keyword>
<keyword id="KW-0408">Iron</keyword>
<keyword id="KW-0411">Iron-sulfur</keyword>
<keyword id="KW-0456">Lyase</keyword>
<keyword id="KW-0479">Metal-binding</keyword>
<keyword id="KW-1185">Reference proteome</keyword>
<keyword id="KW-0694">RNA-binding</keyword>
<keyword id="KW-0816">Tricarboxylic acid cycle</keyword>
<comment type="function">
    <text evidence="2 3 5 6 7 8">Involved in both the tricarboxylic acid (TCA) and methylcitric acid cycles (PubMed:28956599). Catalyzes the reversible isomerization of citrate to isocitrate via cis-aconitate (PubMed:23354745, PubMed:3110133). Also catalyzes the rehydration of 2-methyl-cis-aconitate to produce 2-methylisocitrate (PubMed:28956599). The apo form of AcnA functions as a RNA-binding regulatory protein which plays a role in the regulation of citrate concentration and in the sporulation. To prevent the accumulation of excessive levels of citrate, it binds near the 5' end of the citZ mRNA, decreasing its stability and thereby limiting the concentration of citrate synthase in the cell. Aconitase also binds to the gerE transcript late in sporulation and stabilizes it for translation, thereby increasing the rate and level of GerE protein accumulation (PubMed:10468622, PubMed:16923907, PubMed:23354745, PubMed:9393699).</text>
</comment>
<comment type="catalytic activity">
    <reaction evidence="5">
        <text>citrate = D-threo-isocitrate</text>
        <dbReference type="Rhea" id="RHEA:10336"/>
        <dbReference type="ChEBI" id="CHEBI:15562"/>
        <dbReference type="ChEBI" id="CHEBI:16947"/>
        <dbReference type="EC" id="4.2.1.3"/>
    </reaction>
</comment>
<comment type="catalytic activity">
    <reaction evidence="6">
        <text>3-hydroxybutane-1,2,3-tricarboxylate = 2-methyl-cis-aconitate + H2O</text>
        <dbReference type="Rhea" id="RHEA:57500"/>
        <dbReference type="ChEBI" id="CHEBI:15377"/>
        <dbReference type="ChEBI" id="CHEBI:57872"/>
        <dbReference type="ChEBI" id="CHEBI:141790"/>
    </reaction>
</comment>
<comment type="cofactor">
    <cofactor evidence="7">
        <name>[4Fe-4S] cluster</name>
        <dbReference type="ChEBI" id="CHEBI:49883"/>
    </cofactor>
    <text evidence="7">Binds 1 [4Fe-4S] cluster per subunit.</text>
</comment>
<comment type="pathway">
    <text evidence="14">Carbohydrate metabolism; tricarboxylic acid cycle; isocitrate from oxaloacetate: step 2/2.</text>
</comment>
<comment type="subunit">
    <text evidence="7">Monomer.</text>
</comment>
<comment type="induction">
    <text evidence="4">By citrate via CcpC. When citrate is absent, CcpC binds to the sites near the citB promoter and blocks expression. When citrate is present, it causes a change in the interaction of CcpC with its binding sites, resulting in derepression of citB. When citrate is very abundant, CcpC activates citB expression, presumably reflecting a change in the interaction of CcpC with RNA polymerase. Also induced by decoyinine and nutrient depletion.</text>
</comment>
<comment type="domain">
    <text evidence="3">Mutagenesis of different positions (F662L, R741F, Q745E, I810T and V853A) on the C-terminal region of citB gene product shows that even B.subtilis mutant has high aconitase catalytic activity, it is defective in sporulation. The defect is at a late stage of sporulation, specifically affecting expression of sigma-K-dependent genes, many of which are important for spore coat assembly and require transcriptional activation by GerE. It strongly suggests that aconitase RNA binding activity may stabilize gerE mRNA in order to allow efficient GerE synthesis and proper timing of spore coat assembly.</text>
</comment>
<comment type="disruption phenotype">
    <text evidence="8">Cells lacking this gene show a dramatic increase in the concentration of citrate. This accumulation of citrate prevents sporulation due to chelation by citrate of divalent cations required for proper functioning of the Spo0A-initiated phosphorelay.</text>
</comment>
<comment type="miscellaneous">
    <text evidence="2 5">Whether aconitase is active as an enzyme or an RNA-binding protein is determined by the status of an iron-sulfur (4Fe-4S) cluster that is essential for the catalytic activity of all aconitases. Citrate is both cotransported with iron and a chelator of divalent cations, including iron. If the intracellular citrate level becomes excessive, iron will be sequestered away from iron-containing proteins, including aconitase. Since excess citrate greatly stimulates aconitase synthesis via the positive regulatory effect of CcpC, the cell will gain the ability to metabolize citrate at a higher rate. If so much iron has been sequestered that aconitase loses enzymatic activity, the cell will acquire a high concentration of enzymatically inactive but RNA-binding-competent aconitase molecules. These aconitase proteins can bind to the citZ mRNA and reduce the rate of citrate accumulation by restricting the synthesis of citrate synthase protein.</text>
</comment>
<comment type="similarity">
    <text evidence="12">Belongs to the aconitase/IPM isomerase family.</text>
</comment>
<dbReference type="EC" id="4.2.1.3" evidence="5"/>
<dbReference type="EC" id="4.2.1.-" evidence="6"/>
<dbReference type="EMBL" id="Z73234">
    <property type="protein sequence ID" value="CAA97599.1"/>
    <property type="molecule type" value="Genomic_DNA"/>
</dbReference>
<dbReference type="EMBL" id="AL009126">
    <property type="protein sequence ID" value="CAB13684.1"/>
    <property type="molecule type" value="Genomic_DNA"/>
</dbReference>
<dbReference type="EMBL" id="M16776">
    <property type="protein sequence ID" value="AAA22316.1"/>
    <property type="molecule type" value="Genomic_DNA"/>
</dbReference>
<dbReference type="PIR" id="G69599">
    <property type="entry name" value="G69599"/>
</dbReference>
<dbReference type="RefSeq" id="NP_389683.1">
    <property type="nucleotide sequence ID" value="NC_000964.3"/>
</dbReference>
<dbReference type="SMR" id="P09339"/>
<dbReference type="FunCoup" id="P09339">
    <property type="interactions" value="681"/>
</dbReference>
<dbReference type="IntAct" id="P09339">
    <property type="interactions" value="1"/>
</dbReference>
<dbReference type="MINT" id="P09339"/>
<dbReference type="STRING" id="224308.BSU18000"/>
<dbReference type="jPOST" id="P09339"/>
<dbReference type="PaxDb" id="224308-BSU18000"/>
<dbReference type="EnsemblBacteria" id="CAB13684">
    <property type="protein sequence ID" value="CAB13684"/>
    <property type="gene ID" value="BSU_18000"/>
</dbReference>
<dbReference type="GeneID" id="938140"/>
<dbReference type="KEGG" id="bsu:BSU18000"/>
<dbReference type="PATRIC" id="fig|224308.179.peg.1961"/>
<dbReference type="eggNOG" id="COG1048">
    <property type="taxonomic scope" value="Bacteria"/>
</dbReference>
<dbReference type="InParanoid" id="P09339"/>
<dbReference type="OrthoDB" id="9764318at2"/>
<dbReference type="PhylomeDB" id="P09339"/>
<dbReference type="BioCyc" id="BSUB:BSU18000-MONOMER"/>
<dbReference type="BioCyc" id="MetaCyc:BSU18000-MONOMER"/>
<dbReference type="BRENDA" id="4.2.1.3">
    <property type="organism ID" value="658"/>
</dbReference>
<dbReference type="UniPathway" id="UPA00223">
    <property type="reaction ID" value="UER00718"/>
</dbReference>
<dbReference type="Proteomes" id="UP000001570">
    <property type="component" value="Chromosome"/>
</dbReference>
<dbReference type="GO" id="GO:0005829">
    <property type="term" value="C:cytosol"/>
    <property type="evidence" value="ECO:0000318"/>
    <property type="project" value="GO_Central"/>
</dbReference>
<dbReference type="GO" id="GO:0047456">
    <property type="term" value="F:2-methylisocitrate dehydratase activity"/>
    <property type="evidence" value="ECO:0000250"/>
    <property type="project" value="UniProtKB"/>
</dbReference>
<dbReference type="GO" id="GO:0051539">
    <property type="term" value="F:4 iron, 4 sulfur cluster binding"/>
    <property type="evidence" value="ECO:0000314"/>
    <property type="project" value="UniProtKB"/>
</dbReference>
<dbReference type="GO" id="GO:0003994">
    <property type="term" value="F:aconitate hydratase activity"/>
    <property type="evidence" value="ECO:0000314"/>
    <property type="project" value="UniProtKB"/>
</dbReference>
<dbReference type="GO" id="GO:0030350">
    <property type="term" value="F:iron-responsive element binding"/>
    <property type="evidence" value="ECO:0000318"/>
    <property type="project" value="GO_Central"/>
</dbReference>
<dbReference type="GO" id="GO:0046872">
    <property type="term" value="F:metal ion binding"/>
    <property type="evidence" value="ECO:0007669"/>
    <property type="project" value="UniProtKB-KW"/>
</dbReference>
<dbReference type="GO" id="GO:0003730">
    <property type="term" value="F:mRNA 3'-UTR binding"/>
    <property type="evidence" value="ECO:0000314"/>
    <property type="project" value="UniProtKB"/>
</dbReference>
<dbReference type="GO" id="GO:0003729">
    <property type="term" value="F:mRNA binding"/>
    <property type="evidence" value="ECO:0000314"/>
    <property type="project" value="UniProtKB"/>
</dbReference>
<dbReference type="GO" id="GO:0019679">
    <property type="term" value="P:propionate metabolic process, methylcitrate cycle"/>
    <property type="evidence" value="ECO:0000304"/>
    <property type="project" value="UniProtKB"/>
</dbReference>
<dbReference type="GO" id="GO:0043937">
    <property type="term" value="P:regulation of sporulation"/>
    <property type="evidence" value="ECO:0000314"/>
    <property type="project" value="UniProtKB"/>
</dbReference>
<dbReference type="GO" id="GO:0006099">
    <property type="term" value="P:tricarboxylic acid cycle"/>
    <property type="evidence" value="ECO:0000318"/>
    <property type="project" value="GO_Central"/>
</dbReference>
<dbReference type="CDD" id="cd01586">
    <property type="entry name" value="AcnA_IRP"/>
    <property type="match status" value="1"/>
</dbReference>
<dbReference type="CDD" id="cd01580">
    <property type="entry name" value="AcnA_IRP_Swivel"/>
    <property type="match status" value="1"/>
</dbReference>
<dbReference type="FunFam" id="3.20.19.10:FF:000001">
    <property type="entry name" value="Aconitate hydratase"/>
    <property type="match status" value="1"/>
</dbReference>
<dbReference type="FunFam" id="3.30.499.10:FF:000002">
    <property type="entry name" value="Aconitate hydratase"/>
    <property type="match status" value="1"/>
</dbReference>
<dbReference type="FunFam" id="3.30.499.10:FF:000005">
    <property type="entry name" value="cytoplasmic aconitate hydratase"/>
    <property type="match status" value="1"/>
</dbReference>
<dbReference type="Gene3D" id="6.10.190.10">
    <property type="match status" value="1"/>
</dbReference>
<dbReference type="Gene3D" id="3.30.499.10">
    <property type="entry name" value="Aconitase, domain 3"/>
    <property type="match status" value="2"/>
</dbReference>
<dbReference type="Gene3D" id="3.20.19.10">
    <property type="entry name" value="Aconitase, domain 4"/>
    <property type="match status" value="1"/>
</dbReference>
<dbReference type="InterPro" id="IPR044137">
    <property type="entry name" value="AcnA_IRP_Swivel"/>
</dbReference>
<dbReference type="InterPro" id="IPR015931">
    <property type="entry name" value="Acnase/IPM_dHydase_lsu_aba_1/3"/>
</dbReference>
<dbReference type="InterPro" id="IPR001030">
    <property type="entry name" value="Acoase/IPM_deHydtase_lsu_aba"/>
</dbReference>
<dbReference type="InterPro" id="IPR015928">
    <property type="entry name" value="Aconitase/3IPM_dehydase_swvl"/>
</dbReference>
<dbReference type="InterPro" id="IPR006249">
    <property type="entry name" value="Aconitase/IRP2"/>
</dbReference>
<dbReference type="InterPro" id="IPR018136">
    <property type="entry name" value="Aconitase_4Fe-4S_BS"/>
</dbReference>
<dbReference type="InterPro" id="IPR036008">
    <property type="entry name" value="Aconitase_4Fe-4S_dom"/>
</dbReference>
<dbReference type="InterPro" id="IPR000573">
    <property type="entry name" value="AconitaseA/IPMdHydase_ssu_swvl"/>
</dbReference>
<dbReference type="NCBIfam" id="TIGR01341">
    <property type="entry name" value="aconitase_1"/>
    <property type="match status" value="1"/>
</dbReference>
<dbReference type="NCBIfam" id="NF006757">
    <property type="entry name" value="PRK09277.1"/>
    <property type="match status" value="1"/>
</dbReference>
<dbReference type="NCBIfam" id="NF009520">
    <property type="entry name" value="PRK12881.1"/>
    <property type="match status" value="1"/>
</dbReference>
<dbReference type="PANTHER" id="PTHR11670">
    <property type="entry name" value="ACONITASE/IRON-RESPONSIVE ELEMENT FAMILY MEMBER"/>
    <property type="match status" value="1"/>
</dbReference>
<dbReference type="Pfam" id="PF00330">
    <property type="entry name" value="Aconitase"/>
    <property type="match status" value="1"/>
</dbReference>
<dbReference type="Pfam" id="PF00694">
    <property type="entry name" value="Aconitase_C"/>
    <property type="match status" value="1"/>
</dbReference>
<dbReference type="PRINTS" id="PR00415">
    <property type="entry name" value="ACONITASE"/>
</dbReference>
<dbReference type="SUPFAM" id="SSF53732">
    <property type="entry name" value="Aconitase iron-sulfur domain"/>
    <property type="match status" value="1"/>
</dbReference>
<dbReference type="SUPFAM" id="SSF52016">
    <property type="entry name" value="LeuD/IlvD-like"/>
    <property type="match status" value="1"/>
</dbReference>
<dbReference type="PROSITE" id="PS00450">
    <property type="entry name" value="ACONITASE_1"/>
    <property type="match status" value="1"/>
</dbReference>
<dbReference type="PROSITE" id="PS01244">
    <property type="entry name" value="ACONITASE_2"/>
    <property type="match status" value="1"/>
</dbReference>
<reference key="1">
    <citation type="journal article" date="1996" name="Microbiology">
        <title>New genes in the 170 degrees region of the Bacillus subtilis genome encode DNA gyrase subunits, a thioredoxin, a xylanase and an amino acid transporter.</title>
        <authorList>
            <person name="Rose M."/>
            <person name="Entian K.-D."/>
        </authorList>
    </citation>
    <scope>NUCLEOTIDE SEQUENCE [GENOMIC DNA]</scope>
    <source>
        <strain>168</strain>
    </source>
</reference>
<reference key="2">
    <citation type="journal article" date="1997" name="Nature">
        <title>The complete genome sequence of the Gram-positive bacterium Bacillus subtilis.</title>
        <authorList>
            <person name="Kunst F."/>
            <person name="Ogasawara N."/>
            <person name="Moszer I."/>
            <person name="Albertini A.M."/>
            <person name="Alloni G."/>
            <person name="Azevedo V."/>
            <person name="Bertero M.G."/>
            <person name="Bessieres P."/>
            <person name="Bolotin A."/>
            <person name="Borchert S."/>
            <person name="Borriss R."/>
            <person name="Boursier L."/>
            <person name="Brans A."/>
            <person name="Braun M."/>
            <person name="Brignell S.C."/>
            <person name="Bron S."/>
            <person name="Brouillet S."/>
            <person name="Bruschi C.V."/>
            <person name="Caldwell B."/>
            <person name="Capuano V."/>
            <person name="Carter N.M."/>
            <person name="Choi S.-K."/>
            <person name="Codani J.-J."/>
            <person name="Connerton I.F."/>
            <person name="Cummings N.J."/>
            <person name="Daniel R.A."/>
            <person name="Denizot F."/>
            <person name="Devine K.M."/>
            <person name="Duesterhoeft A."/>
            <person name="Ehrlich S.D."/>
            <person name="Emmerson P.T."/>
            <person name="Entian K.-D."/>
            <person name="Errington J."/>
            <person name="Fabret C."/>
            <person name="Ferrari E."/>
            <person name="Foulger D."/>
            <person name="Fritz C."/>
            <person name="Fujita M."/>
            <person name="Fujita Y."/>
            <person name="Fuma S."/>
            <person name="Galizzi A."/>
            <person name="Galleron N."/>
            <person name="Ghim S.-Y."/>
            <person name="Glaser P."/>
            <person name="Goffeau A."/>
            <person name="Golightly E.J."/>
            <person name="Grandi G."/>
            <person name="Guiseppi G."/>
            <person name="Guy B.J."/>
            <person name="Haga K."/>
            <person name="Haiech J."/>
            <person name="Harwood C.R."/>
            <person name="Henaut A."/>
            <person name="Hilbert H."/>
            <person name="Holsappel S."/>
            <person name="Hosono S."/>
            <person name="Hullo M.-F."/>
            <person name="Itaya M."/>
            <person name="Jones L.-M."/>
            <person name="Joris B."/>
            <person name="Karamata D."/>
            <person name="Kasahara Y."/>
            <person name="Klaerr-Blanchard M."/>
            <person name="Klein C."/>
            <person name="Kobayashi Y."/>
            <person name="Koetter P."/>
            <person name="Koningstein G."/>
            <person name="Krogh S."/>
            <person name="Kumano M."/>
            <person name="Kurita K."/>
            <person name="Lapidus A."/>
            <person name="Lardinois S."/>
            <person name="Lauber J."/>
            <person name="Lazarevic V."/>
            <person name="Lee S.-M."/>
            <person name="Levine A."/>
            <person name="Liu H."/>
            <person name="Masuda S."/>
            <person name="Mauel C."/>
            <person name="Medigue C."/>
            <person name="Medina N."/>
            <person name="Mellado R.P."/>
            <person name="Mizuno M."/>
            <person name="Moestl D."/>
            <person name="Nakai S."/>
            <person name="Noback M."/>
            <person name="Noone D."/>
            <person name="O'Reilly M."/>
            <person name="Ogawa K."/>
            <person name="Ogiwara A."/>
            <person name="Oudega B."/>
            <person name="Park S.-H."/>
            <person name="Parro V."/>
            <person name="Pohl T.M."/>
            <person name="Portetelle D."/>
            <person name="Porwollik S."/>
            <person name="Prescott A.M."/>
            <person name="Presecan E."/>
            <person name="Pujic P."/>
            <person name="Purnelle B."/>
            <person name="Rapoport G."/>
            <person name="Rey M."/>
            <person name="Reynolds S."/>
            <person name="Rieger M."/>
            <person name="Rivolta C."/>
            <person name="Rocha E."/>
            <person name="Roche B."/>
            <person name="Rose M."/>
            <person name="Sadaie Y."/>
            <person name="Sato T."/>
            <person name="Scanlan E."/>
            <person name="Schleich S."/>
            <person name="Schroeter R."/>
            <person name="Scoffone F."/>
            <person name="Sekiguchi J."/>
            <person name="Sekowska A."/>
            <person name="Seror S.J."/>
            <person name="Serror P."/>
            <person name="Shin B.-S."/>
            <person name="Soldo B."/>
            <person name="Sorokin A."/>
            <person name="Tacconi E."/>
            <person name="Takagi T."/>
            <person name="Takahashi H."/>
            <person name="Takemaru K."/>
            <person name="Takeuchi M."/>
            <person name="Tamakoshi A."/>
            <person name="Tanaka T."/>
            <person name="Terpstra P."/>
            <person name="Tognoni A."/>
            <person name="Tosato V."/>
            <person name="Uchiyama S."/>
            <person name="Vandenbol M."/>
            <person name="Vannier F."/>
            <person name="Vassarotti A."/>
            <person name="Viari A."/>
            <person name="Wambutt R."/>
            <person name="Wedler E."/>
            <person name="Wedler H."/>
            <person name="Weitzenegger T."/>
            <person name="Winters P."/>
            <person name="Wipat A."/>
            <person name="Yamamoto H."/>
            <person name="Yamane K."/>
            <person name="Yasumoto K."/>
            <person name="Yata K."/>
            <person name="Yoshida K."/>
            <person name="Yoshikawa H.-F."/>
            <person name="Zumstein E."/>
            <person name="Yoshikawa H."/>
            <person name="Danchin A."/>
        </authorList>
    </citation>
    <scope>NUCLEOTIDE SEQUENCE [LARGE SCALE GENOMIC DNA]</scope>
    <source>
        <strain>168</strain>
    </source>
</reference>
<reference key="3">
    <citation type="thesis" date="1988" institute="University of Sheffield" country="United Kingdom">
        <authorList>
            <person name="Wilde R.J."/>
        </authorList>
    </citation>
    <scope>NUCLEOTIDE SEQUENCE [GENOMIC DNA] OF 1-141</scope>
</reference>
<reference key="4">
    <citation type="journal article" date="1987" name="J. Bacteriol.">
        <title>Purification of aconitase from Bacillus subtilis and correlation of its N-terminal amino acid sequence with the sequence of the citB gene.</title>
        <authorList>
            <person name="Dingman D.W."/>
            <person name="Sonenshein A.L."/>
        </authorList>
    </citation>
    <scope>NUCLEOTIDE SEQUENCE [GENOMIC DNA] OF 1-45</scope>
    <scope>PROTEIN SEQUENCE OF 2-8</scope>
    <scope>FUNCTION AS AN ACONITASE</scope>
    <scope>COFACTOR</scope>
    <scope>SUBUNIT</scope>
</reference>
<reference key="5">
    <citation type="submission" date="1987-07" db="EMBL/GenBank/DDBJ databases">
        <authorList>
            <person name="Sonenshein A.L."/>
        </authorList>
    </citation>
    <scope>SEQUENCE REVISION</scope>
</reference>
<reference key="6">
    <citation type="journal article" date="1997" name="J. Bacteriol.">
        <title>A null mutation in the Bacillus subtilis aconitase gene causes a block in Spo0A-phosphate-dependent gene expression.</title>
        <authorList>
            <person name="Craig J.E."/>
            <person name="Ford M.J."/>
            <person name="Blaydon D.C."/>
            <person name="Sonenshein A.L."/>
        </authorList>
    </citation>
    <scope>FUNCTION</scope>
    <scope>DISRUPTION PHENOTYPE</scope>
</reference>
<reference key="7">
    <citation type="journal article" date="1999" name="Proc. Natl. Acad. Sci. U.S.A.">
        <title>Bacillus subtilis aconitase is an RNA-binding protein.</title>
        <authorList>
            <person name="Alen C."/>
            <person name="Sonenshein A.L."/>
        </authorList>
    </citation>
    <scope>FUNCTION AS RNA-BINDING PROTEIN</scope>
</reference>
<reference key="8">
    <citation type="journal article" date="2006" name="J. Bacteriol.">
        <title>Bacillus subtilis aconitase is required for efficient late-sporulation gene expression.</title>
        <authorList>
            <person name="Serio A.W."/>
            <person name="Pechter K.B."/>
            <person name="Sonenshein A.L."/>
        </authorList>
    </citation>
    <scope>FUNCTION</scope>
    <scope>DOMAIN</scope>
</reference>
<reference key="9">
    <citation type="journal article" date="2013" name="J. Bacteriol.">
        <title>Two roles for aconitase in the regulation of tricarboxylic acid branch gene expression in Bacillus subtilis.</title>
        <authorList>
            <person name="Pechter K.B."/>
            <person name="Meyer F.M."/>
            <person name="Serio A.W."/>
            <person name="Stuelke J."/>
            <person name="Sonenshein A.L."/>
        </authorList>
    </citation>
    <scope>FUNCTION</scope>
    <scope>CATALYTIC ACTIVITY</scope>
    <scope>MUTAGENESIS OF CYS-450 AND ARG-741</scope>
    <scope>REACTION MECHANISM</scope>
</reference>
<reference key="10">
    <citation type="journal article" date="2013" name="Microbiology">
        <title>Dual role of CcpC protein in regulation of aconitase gene expression in Listeria monocytogenes and Bacillus subtilis.</title>
        <authorList>
            <person name="Mittal M."/>
            <person name="Pechter K.B."/>
            <person name="Picossi S."/>
            <person name="Kim H.J."/>
            <person name="Kerstein K.O."/>
            <person name="Sonenshein A.L."/>
        </authorList>
    </citation>
    <scope>INDUCTION</scope>
</reference>
<reference key="11">
    <citation type="journal article" date="2017" name="Biochemistry">
        <title>First biochemical characterization of a methylcitric acid cycle from Bacillus subtilis strain 168.</title>
        <authorList>
            <person name="Reddick J.J."/>
            <person name="Sirkisoon S."/>
            <person name="Dahal R.A."/>
            <person name="Hardesty G."/>
            <person name="Hage N.E."/>
            <person name="Booth W.T."/>
            <person name="Quattlebaum A.L."/>
            <person name="Mills S.N."/>
            <person name="Meadows V.G."/>
            <person name="Adams S.L.H."/>
            <person name="Doyle J.S."/>
            <person name="Kiel B.E."/>
        </authorList>
    </citation>
    <scope>FUNCTION AS A METHYLACONITATE HYDRATASE</scope>
    <scope>CATALYTIC ACTIVITY</scope>
    <source>
        <strain>168</strain>
    </source>
</reference>
<feature type="initiator methionine" description="Removed" evidence="7">
    <location>
        <position position="1"/>
    </location>
</feature>
<feature type="chain" id="PRO_0000076655" description="Aconitate hydratase A">
    <location>
        <begin position="2"/>
        <end position="909"/>
    </location>
</feature>
<feature type="binding site" evidence="1">
    <location>
        <position position="450"/>
    </location>
    <ligand>
        <name>[4Fe-4S] cluster</name>
        <dbReference type="ChEBI" id="CHEBI:49883"/>
    </ligand>
</feature>
<feature type="binding site" evidence="1">
    <location>
        <position position="516"/>
    </location>
    <ligand>
        <name>[4Fe-4S] cluster</name>
        <dbReference type="ChEBI" id="CHEBI:49883"/>
    </ligand>
</feature>
<feature type="binding site" evidence="1">
    <location>
        <position position="519"/>
    </location>
    <ligand>
        <name>[4Fe-4S] cluster</name>
        <dbReference type="ChEBI" id="CHEBI:49883"/>
    </ligand>
</feature>
<feature type="mutagenesis site" description="Loss of aconitase activity. It is glutamate auxotroph and accumulates citrate. Exhibits overexpression of the citB promoter and accumulates high levels of inactive aconitase." evidence="5">
    <original>C</original>
    <variation>S</variation>
    <location>
        <position position="450"/>
    </location>
</feature>
<feature type="mutagenesis site" description="Same aconitase activity compared to the wild-type. It is glutamate prototroph and accumulates citrate. Exhibits overexpression of the citB promoter and accumulates high levels of active aconitase." evidence="5">
    <original>R</original>
    <variation>E</variation>
    <location>
        <position position="741"/>
    </location>
</feature>
<feature type="sequence conflict" description="In Ref. 4; AAA22316." evidence="12" ref="4">
    <original>SKL</original>
    <variation>FEA</variation>
    <location>
        <begin position="43"/>
        <end position="45"/>
    </location>
</feature>
<feature type="sequence conflict" description="In Ref. 3; no nucleotide entry." evidence="12" ref="3">
    <original>G</original>
    <variation>V</variation>
    <location>
        <position position="119"/>
    </location>
</feature>
<evidence type="ECO:0000250" key="1">
    <source>
        <dbReference type="UniProtKB" id="P36683"/>
    </source>
</evidence>
<evidence type="ECO:0000269" key="2">
    <source>
    </source>
</evidence>
<evidence type="ECO:0000269" key="3">
    <source>
    </source>
</evidence>
<evidence type="ECO:0000269" key="4">
    <source>
    </source>
</evidence>
<evidence type="ECO:0000269" key="5">
    <source>
    </source>
</evidence>
<evidence type="ECO:0000269" key="6">
    <source>
    </source>
</evidence>
<evidence type="ECO:0000269" key="7">
    <source>
    </source>
</evidence>
<evidence type="ECO:0000269" key="8">
    <source>
    </source>
</evidence>
<evidence type="ECO:0000303" key="9">
    <source>
    </source>
</evidence>
<evidence type="ECO:0000303" key="10">
    <source>
    </source>
</evidence>
<evidence type="ECO:0000303" key="11">
    <source>
    </source>
</evidence>
<evidence type="ECO:0000305" key="12"/>
<evidence type="ECO:0000305" key="13">
    <source>
    </source>
</evidence>
<evidence type="ECO:0000305" key="14">
    <source>
    </source>
</evidence>
<accession>P09339</accession>
<accession>Q45059</accession>
<proteinExistence type="evidence at protein level"/>
<protein>
    <recommendedName>
        <fullName evidence="11">Aconitate hydratase A</fullName>
        <shortName evidence="11">ACN</shortName>
        <shortName evidence="11">Aconitase</shortName>
        <ecNumber evidence="5">4.2.1.3</ecNumber>
    </recommendedName>
    <alternativeName>
        <fullName evidence="10">Aconitate/2-methylaconitate hydratase</fullName>
        <ecNumber evidence="6">4.2.1.-</ecNumber>
    </alternativeName>
    <alternativeName>
        <fullName evidence="13">Iron-responsive protein-like</fullName>
        <shortName evidence="13">IRP-like</shortName>
    </alternativeName>
    <alternativeName>
        <fullName evidence="9">RNA-binding protein</fullName>
    </alternativeName>
</protein>